<gene>
    <name evidence="5" type="ORF">SADFL11_2813</name>
</gene>
<dbReference type="EC" id="5.1.1.8" evidence="2"/>
<dbReference type="EMBL" id="ACCU02000004">
    <property type="protein sequence ID" value="EEE45524.1"/>
    <property type="molecule type" value="Genomic_DNA"/>
</dbReference>
<dbReference type="RefSeq" id="WP_008193519.1">
    <property type="nucleotide sequence ID" value="NZ_CM011002.1"/>
</dbReference>
<dbReference type="SMR" id="B9R4E3"/>
<dbReference type="HOGENOM" id="CLU_036729_1_0_5"/>
<dbReference type="SABIO-RK" id="B9R4E3"/>
<dbReference type="Proteomes" id="UP000004703">
    <property type="component" value="Chromosome"/>
</dbReference>
<dbReference type="GO" id="GO:0047580">
    <property type="term" value="F:4-hydroxyproline epimerase activity"/>
    <property type="evidence" value="ECO:0000314"/>
    <property type="project" value="CACAO"/>
</dbReference>
<dbReference type="FunFam" id="3.10.310.10:FF:000012">
    <property type="entry name" value="4-hydroxyproline 2-epimerase"/>
    <property type="match status" value="1"/>
</dbReference>
<dbReference type="Gene3D" id="3.10.310.10">
    <property type="entry name" value="Diaminopimelate Epimerase, Chain A, domain 1"/>
    <property type="match status" value="2"/>
</dbReference>
<dbReference type="InterPro" id="IPR008794">
    <property type="entry name" value="Pro_racemase_fam"/>
</dbReference>
<dbReference type="PANTHER" id="PTHR33442">
    <property type="entry name" value="TRANS-3-HYDROXY-L-PROLINE DEHYDRATASE"/>
    <property type="match status" value="1"/>
</dbReference>
<dbReference type="PANTHER" id="PTHR33442:SF1">
    <property type="entry name" value="TRANS-3-HYDROXY-L-PROLINE DEHYDRATASE"/>
    <property type="match status" value="1"/>
</dbReference>
<dbReference type="Pfam" id="PF05544">
    <property type="entry name" value="Pro_racemase"/>
    <property type="match status" value="1"/>
</dbReference>
<dbReference type="PIRSF" id="PIRSF029792">
    <property type="entry name" value="Pro_racemase"/>
    <property type="match status" value="1"/>
</dbReference>
<dbReference type="SFLD" id="SFLDS00028">
    <property type="entry name" value="Proline_Racemase"/>
    <property type="match status" value="1"/>
</dbReference>
<dbReference type="SUPFAM" id="SSF54506">
    <property type="entry name" value="Diaminopimelate epimerase-like"/>
    <property type="match status" value="1"/>
</dbReference>
<keyword id="KW-0413">Isomerase</keyword>
<evidence type="ECO:0000250" key="1">
    <source>
        <dbReference type="UniProtKB" id="Q4KGU2"/>
    </source>
</evidence>
<evidence type="ECO:0000269" key="2">
    <source>
    </source>
</evidence>
<evidence type="ECO:0000303" key="3">
    <source>
    </source>
</evidence>
<evidence type="ECO:0000305" key="4"/>
<evidence type="ECO:0000312" key="5">
    <source>
        <dbReference type="EMBL" id="EEE45524.1"/>
    </source>
</evidence>
<name>4HYPE_ROSAD</name>
<organism>
    <name type="scientific">Roseibium alexandrii (strain DSM 17067 / NCIMB 14079 / DFL-11)</name>
    <name type="common">Labrenzia alexandrii</name>
    <dbReference type="NCBI Taxonomy" id="244592"/>
    <lineage>
        <taxon>Bacteria</taxon>
        <taxon>Pseudomonadati</taxon>
        <taxon>Pseudomonadota</taxon>
        <taxon>Alphaproteobacteria</taxon>
        <taxon>Hyphomicrobiales</taxon>
        <taxon>Stappiaceae</taxon>
        <taxon>Roseibium</taxon>
    </lineage>
</organism>
<protein>
    <recommendedName>
        <fullName evidence="3">4-hydroxyproline 2-epimerase</fullName>
        <shortName>4Hyp 2-epimerase</shortName>
        <shortName evidence="3">4HypE</shortName>
        <ecNumber evidence="2">5.1.1.8</ecNumber>
    </recommendedName>
</protein>
<reference key="1">
    <citation type="submission" date="2008-01" db="EMBL/GenBank/DDBJ databases">
        <authorList>
            <person name="Wagner-Dobler I."/>
            <person name="Ferriera S."/>
            <person name="Johnson J."/>
            <person name="Kravitz S."/>
            <person name="Beeson K."/>
            <person name="Sutton G."/>
            <person name="Rogers Y.-H."/>
            <person name="Friedman R."/>
            <person name="Frazier M."/>
            <person name="Venter J.C."/>
        </authorList>
    </citation>
    <scope>NUCLEOTIDE SEQUENCE [LARGE SCALE GENOMIC DNA]</scope>
    <source>
        <strain>DSM 17067 / NCIMB 14079 / DFL-11</strain>
    </source>
</reference>
<reference key="2">
    <citation type="journal article" date="2014" name="Elife">
        <title>Prediction and characterization of enzymatic activities guided by sequence similarity and genome neighborhood networks.</title>
        <authorList>
            <person name="Zhao S."/>
            <person name="Sakai A."/>
            <person name="Zhang X."/>
            <person name="Vetting M.W."/>
            <person name="Kumar R."/>
            <person name="Hillerich B."/>
            <person name="San Francisco B."/>
            <person name="Solbiati J."/>
            <person name="Steves A."/>
            <person name="Brown S."/>
            <person name="Akiva E."/>
            <person name="Barber A."/>
            <person name="Seidel R.D."/>
            <person name="Babbitt P.C."/>
            <person name="Almo S.C."/>
            <person name="Gerlt J.A."/>
            <person name="Jacobson M.P."/>
        </authorList>
    </citation>
    <scope>FUNCTION</scope>
    <scope>CATALYTIC ACTIVITY</scope>
    <scope>BIOPHYSICOCHEMICAL PROPERTIES</scope>
</reference>
<proteinExistence type="evidence at protein level"/>
<accession>B9R4E3</accession>
<sequence length="327" mass="35075">MRVIDSHTAGEPTRLVVEGGPDLGPGSLIEKAACLEAEHMDFCASVVLEPRGHDAIIGALLLPPSQPDCAAAVIYFNNLQNLGMCGHATIGLAVTLAHMGRIDPGRHKFETPVGIVEVDLQDANTVSVVNVESYRLHKDVTVEVPGHGKVTGDVAWGGNWFFLVKESPFDLTLENVPALTAYTKTIRQALENAGVTGTDCAWIDHIELFGPPKDPFAQSRNFVLCPGGAYDRSPCGTGCSAKLACLAEDGVLAPGEDWIQESVIGSTYRISYQPGTTKGVIPTITGQAFVTSDAHLIFNPADPYRFGIRPQNWTTSWITRTLSVEHG</sequence>
<comment type="function">
    <text evidence="2">Catalyzes the epimerization of trans-4-hydroxy-L-proline (t4LHyp) to cis-4-hydroxy-D-proline (c4DHyp). Displays no proline racemase activity.</text>
</comment>
<comment type="catalytic activity">
    <reaction evidence="2">
        <text>trans-4-hydroxy-L-proline = cis-4-hydroxy-D-proline</text>
        <dbReference type="Rhea" id="RHEA:21152"/>
        <dbReference type="ChEBI" id="CHEBI:57690"/>
        <dbReference type="ChEBI" id="CHEBI:58375"/>
        <dbReference type="EC" id="5.1.1.8"/>
    </reaction>
</comment>
<comment type="biophysicochemical properties">
    <kinetics>
        <KM evidence="2">4.1 mM for trans-4-hydroxy-L-proline</KM>
        <text evidence="2">kcat is 67 sec(-1) for t4LHyp epimerization.</text>
    </kinetics>
</comment>
<comment type="similarity">
    <text evidence="4">Belongs to the proline racemase family.</text>
</comment>
<feature type="chain" id="PRO_0000432259" description="4-hydroxyproline 2-epimerase">
    <location>
        <begin position="1"/>
        <end position="327"/>
    </location>
</feature>
<feature type="active site" description="Proton acceptor" evidence="1">
    <location>
        <position position="85"/>
    </location>
</feature>
<feature type="active site" description="Proton donor" evidence="1">
    <location>
        <position position="235"/>
    </location>
</feature>
<feature type="binding site" evidence="1">
    <location>
        <begin position="86"/>
        <end position="87"/>
    </location>
    <ligand>
        <name>substrate</name>
    </ligand>
</feature>
<feature type="binding site" evidence="1">
    <location>
        <position position="205"/>
    </location>
    <ligand>
        <name>substrate</name>
    </ligand>
</feature>
<feature type="binding site" evidence="1">
    <location>
        <position position="231"/>
    </location>
    <ligand>
        <name>substrate</name>
    </ligand>
</feature>
<feature type="binding site" evidence="1">
    <location>
        <begin position="236"/>
        <end position="237"/>
    </location>
    <ligand>
        <name>substrate</name>
    </ligand>
</feature>